<reference key="1">
    <citation type="journal article" date="2002" name="Nature">
        <title>Modulation of virulence within a pathogenicity island in vancomycin-resistant Enterococcus faecalis.</title>
        <authorList>
            <person name="Shankar N."/>
            <person name="Baghdayan A.S."/>
            <person name="Gilmore M.S."/>
        </authorList>
    </citation>
    <scope>NUCLEOTIDE SEQUENCE [GENOMIC DNA]</scope>
</reference>
<reference key="2">
    <citation type="journal article" date="2003" name="Science">
        <title>Role of mobile DNA in the evolution of vancomycin-resistant Enterococcus faecalis.</title>
        <authorList>
            <person name="Paulsen I.T."/>
            <person name="Banerjei L."/>
            <person name="Myers G.S.A."/>
            <person name="Nelson K.E."/>
            <person name="Seshadri R."/>
            <person name="Read T.D."/>
            <person name="Fouts D.E."/>
            <person name="Eisen J.A."/>
            <person name="Gill S.R."/>
            <person name="Heidelberg J.F."/>
            <person name="Tettelin H."/>
            <person name="Dodson R.J."/>
            <person name="Umayam L.A."/>
            <person name="Brinkac L.M."/>
            <person name="Beanan M.J."/>
            <person name="Daugherty S.C."/>
            <person name="DeBoy R.T."/>
            <person name="Durkin S.A."/>
            <person name="Kolonay J.F."/>
            <person name="Madupu R."/>
            <person name="Nelson W.C."/>
            <person name="Vamathevan J.J."/>
            <person name="Tran B."/>
            <person name="Upton J."/>
            <person name="Hansen T."/>
            <person name="Shetty J."/>
            <person name="Khouri H.M."/>
            <person name="Utterback T.R."/>
            <person name="Radune D."/>
            <person name="Ketchum K.A."/>
            <person name="Dougherty B.A."/>
            <person name="Fraser C.M."/>
        </authorList>
    </citation>
    <scope>NUCLEOTIDE SEQUENCE [LARGE SCALE GENOMIC DNA]</scope>
    <source>
        <strain>ATCC 700802 / V583</strain>
    </source>
</reference>
<accession>Q8KU55</accession>
<protein>
    <recommendedName>
        <fullName evidence="1">Large ribosomal subunit protein bL33A</fullName>
    </recommendedName>
    <alternativeName>
        <fullName>50S ribosomal protein L33 1</fullName>
    </alternativeName>
</protein>
<name>RL331_ENTFA</name>
<proteinExistence type="inferred from homology"/>
<organism>
    <name type="scientific">Enterococcus faecalis (strain ATCC 700802 / V583)</name>
    <dbReference type="NCBI Taxonomy" id="226185"/>
    <lineage>
        <taxon>Bacteria</taxon>
        <taxon>Bacillati</taxon>
        <taxon>Bacillota</taxon>
        <taxon>Bacilli</taxon>
        <taxon>Lactobacillales</taxon>
        <taxon>Enterococcaceae</taxon>
        <taxon>Enterococcus</taxon>
    </lineage>
</organism>
<comment type="similarity">
    <text evidence="2">Belongs to the bacterial ribosomal protein bL33 family.</text>
</comment>
<dbReference type="EMBL" id="AF454824">
    <property type="protein sequence ID" value="AAM75309.1"/>
    <property type="molecule type" value="Genomic_DNA"/>
</dbReference>
<dbReference type="EMBL" id="AE016830">
    <property type="protein sequence ID" value="AAO80424.1"/>
    <property type="molecule type" value="Genomic_DNA"/>
</dbReference>
<dbReference type="RefSeq" id="NP_814353.1">
    <property type="nucleotide sequence ID" value="NC_004668.1"/>
</dbReference>
<dbReference type="RefSeq" id="WP_002358586.1">
    <property type="nucleotide sequence ID" value="NZ_KE136527.1"/>
</dbReference>
<dbReference type="SMR" id="Q8KU55"/>
<dbReference type="STRING" id="226185.EF_0588"/>
<dbReference type="EnsemblBacteria" id="AAO80424">
    <property type="protein sequence ID" value="AAO80424"/>
    <property type="gene ID" value="EF_0588"/>
</dbReference>
<dbReference type="KEGG" id="efa:EF0588"/>
<dbReference type="PATRIC" id="fig|226185.45.peg.2531"/>
<dbReference type="eggNOG" id="COG0267">
    <property type="taxonomic scope" value="Bacteria"/>
</dbReference>
<dbReference type="HOGENOM" id="CLU_190949_3_2_9"/>
<dbReference type="Proteomes" id="UP000001415">
    <property type="component" value="Chromosome"/>
</dbReference>
<dbReference type="GO" id="GO:0005737">
    <property type="term" value="C:cytoplasm"/>
    <property type="evidence" value="ECO:0007669"/>
    <property type="project" value="UniProtKB-ARBA"/>
</dbReference>
<dbReference type="GO" id="GO:1990904">
    <property type="term" value="C:ribonucleoprotein complex"/>
    <property type="evidence" value="ECO:0007669"/>
    <property type="project" value="UniProtKB-KW"/>
</dbReference>
<dbReference type="GO" id="GO:0005840">
    <property type="term" value="C:ribosome"/>
    <property type="evidence" value="ECO:0007669"/>
    <property type="project" value="UniProtKB-KW"/>
</dbReference>
<dbReference type="GO" id="GO:0003735">
    <property type="term" value="F:structural constituent of ribosome"/>
    <property type="evidence" value="ECO:0007669"/>
    <property type="project" value="InterPro"/>
</dbReference>
<dbReference type="GO" id="GO:0006412">
    <property type="term" value="P:translation"/>
    <property type="evidence" value="ECO:0007669"/>
    <property type="project" value="UniProtKB-UniRule"/>
</dbReference>
<dbReference type="Gene3D" id="2.20.28.120">
    <property type="entry name" value="Ribosomal protein L33"/>
    <property type="match status" value="1"/>
</dbReference>
<dbReference type="HAMAP" id="MF_00294">
    <property type="entry name" value="Ribosomal_bL33"/>
    <property type="match status" value="1"/>
</dbReference>
<dbReference type="InterPro" id="IPR001705">
    <property type="entry name" value="Ribosomal_bL33"/>
</dbReference>
<dbReference type="InterPro" id="IPR018264">
    <property type="entry name" value="Ribosomal_bL33_CS"/>
</dbReference>
<dbReference type="InterPro" id="IPR038584">
    <property type="entry name" value="Ribosomal_bL33_sf"/>
</dbReference>
<dbReference type="InterPro" id="IPR011332">
    <property type="entry name" value="Ribosomal_zn-bd"/>
</dbReference>
<dbReference type="NCBIfam" id="NF001764">
    <property type="entry name" value="PRK00504.1"/>
    <property type="match status" value="1"/>
</dbReference>
<dbReference type="NCBIfam" id="NF001860">
    <property type="entry name" value="PRK00595.1"/>
    <property type="match status" value="1"/>
</dbReference>
<dbReference type="NCBIfam" id="TIGR01023">
    <property type="entry name" value="rpmG_bact"/>
    <property type="match status" value="1"/>
</dbReference>
<dbReference type="PANTHER" id="PTHR43168">
    <property type="entry name" value="50S RIBOSOMAL PROTEIN L33, CHLOROPLASTIC"/>
    <property type="match status" value="1"/>
</dbReference>
<dbReference type="PANTHER" id="PTHR43168:SF2">
    <property type="entry name" value="LARGE RIBOSOMAL SUBUNIT PROTEIN BL33C"/>
    <property type="match status" value="1"/>
</dbReference>
<dbReference type="Pfam" id="PF00471">
    <property type="entry name" value="Ribosomal_L33"/>
    <property type="match status" value="1"/>
</dbReference>
<dbReference type="SUPFAM" id="SSF57829">
    <property type="entry name" value="Zn-binding ribosomal proteins"/>
    <property type="match status" value="1"/>
</dbReference>
<dbReference type="PROSITE" id="PS00582">
    <property type="entry name" value="RIBOSOMAL_L33"/>
    <property type="match status" value="1"/>
</dbReference>
<evidence type="ECO:0000255" key="1">
    <source>
        <dbReference type="HAMAP-Rule" id="MF_00294"/>
    </source>
</evidence>
<evidence type="ECO:0000305" key="2"/>
<gene>
    <name type="primary">rpmG1</name>
    <name type="synonym">rpmG</name>
    <name type="synonym">rpmG-1</name>
    <name type="ordered locus">EF_0588</name>
    <name type="ORF">ef-0106</name>
</gene>
<keyword id="KW-1185">Reference proteome</keyword>
<keyword id="KW-0687">Ribonucleoprotein</keyword>
<keyword id="KW-0689">Ribosomal protein</keyword>
<sequence>MRQNIILECVETGERLYLTSKNKRNNPERIELKKYSPKLRRRAIFKEVK</sequence>
<feature type="chain" id="PRO_0000170161" description="Large ribosomal subunit protein bL33A">
    <location>
        <begin position="1"/>
        <end position="49"/>
    </location>
</feature>